<accession>A1JPR9</accession>
<keyword id="KW-0004">4Fe-4S</keyword>
<keyword id="KW-0963">Cytoplasm</keyword>
<keyword id="KW-0408">Iron</keyword>
<keyword id="KW-0411">Iron-sulfur</keyword>
<keyword id="KW-0479">Metal-binding</keyword>
<keyword id="KW-0949">S-adenosyl-L-methionine</keyword>
<keyword id="KW-0808">Transferase</keyword>
<gene>
    <name evidence="1" type="primary">lipA</name>
    <name type="ordered locus">YE3008</name>
</gene>
<organism>
    <name type="scientific">Yersinia enterocolitica serotype O:8 / biotype 1B (strain NCTC 13174 / 8081)</name>
    <dbReference type="NCBI Taxonomy" id="393305"/>
    <lineage>
        <taxon>Bacteria</taxon>
        <taxon>Pseudomonadati</taxon>
        <taxon>Pseudomonadota</taxon>
        <taxon>Gammaproteobacteria</taxon>
        <taxon>Enterobacterales</taxon>
        <taxon>Yersiniaceae</taxon>
        <taxon>Yersinia</taxon>
    </lineage>
</organism>
<protein>
    <recommendedName>
        <fullName evidence="1">Lipoyl synthase</fullName>
        <ecNumber evidence="1">2.8.1.8</ecNumber>
    </recommendedName>
    <alternativeName>
        <fullName evidence="1">Lip-syn</fullName>
        <shortName evidence="1">LS</shortName>
    </alternativeName>
    <alternativeName>
        <fullName evidence="1">Lipoate synthase</fullName>
    </alternativeName>
    <alternativeName>
        <fullName evidence="1">Lipoic acid synthase</fullName>
    </alternativeName>
    <alternativeName>
        <fullName evidence="1">Sulfur insertion protein LipA</fullName>
    </alternativeName>
</protein>
<feature type="chain" id="PRO_1000012301" description="Lipoyl synthase">
    <location>
        <begin position="1"/>
        <end position="321"/>
    </location>
</feature>
<feature type="domain" description="Radical SAM core" evidence="2">
    <location>
        <begin position="80"/>
        <end position="297"/>
    </location>
</feature>
<feature type="binding site" evidence="1">
    <location>
        <position position="68"/>
    </location>
    <ligand>
        <name>[4Fe-4S] cluster</name>
        <dbReference type="ChEBI" id="CHEBI:49883"/>
        <label>1</label>
    </ligand>
</feature>
<feature type="binding site" evidence="1">
    <location>
        <position position="73"/>
    </location>
    <ligand>
        <name>[4Fe-4S] cluster</name>
        <dbReference type="ChEBI" id="CHEBI:49883"/>
        <label>1</label>
    </ligand>
</feature>
<feature type="binding site" evidence="1">
    <location>
        <position position="79"/>
    </location>
    <ligand>
        <name>[4Fe-4S] cluster</name>
        <dbReference type="ChEBI" id="CHEBI:49883"/>
        <label>1</label>
    </ligand>
</feature>
<feature type="binding site" evidence="1">
    <location>
        <position position="94"/>
    </location>
    <ligand>
        <name>[4Fe-4S] cluster</name>
        <dbReference type="ChEBI" id="CHEBI:49883"/>
        <label>2</label>
        <note>4Fe-4S-S-AdoMet</note>
    </ligand>
</feature>
<feature type="binding site" evidence="1">
    <location>
        <position position="98"/>
    </location>
    <ligand>
        <name>[4Fe-4S] cluster</name>
        <dbReference type="ChEBI" id="CHEBI:49883"/>
        <label>2</label>
        <note>4Fe-4S-S-AdoMet</note>
    </ligand>
</feature>
<feature type="binding site" evidence="1">
    <location>
        <position position="101"/>
    </location>
    <ligand>
        <name>[4Fe-4S] cluster</name>
        <dbReference type="ChEBI" id="CHEBI:49883"/>
        <label>2</label>
        <note>4Fe-4S-S-AdoMet</note>
    </ligand>
</feature>
<feature type="binding site" evidence="1">
    <location>
        <position position="308"/>
    </location>
    <ligand>
        <name>[4Fe-4S] cluster</name>
        <dbReference type="ChEBI" id="CHEBI:49883"/>
        <label>1</label>
    </ligand>
</feature>
<name>LIPA_YERE8</name>
<reference key="1">
    <citation type="journal article" date="2006" name="PLoS Genet.">
        <title>The complete genome sequence and comparative genome analysis of the high pathogenicity Yersinia enterocolitica strain 8081.</title>
        <authorList>
            <person name="Thomson N.R."/>
            <person name="Howard S."/>
            <person name="Wren B.W."/>
            <person name="Holden M.T.G."/>
            <person name="Crossman L."/>
            <person name="Challis G.L."/>
            <person name="Churcher C."/>
            <person name="Mungall K."/>
            <person name="Brooks K."/>
            <person name="Chillingworth T."/>
            <person name="Feltwell T."/>
            <person name="Abdellah Z."/>
            <person name="Hauser H."/>
            <person name="Jagels K."/>
            <person name="Maddison M."/>
            <person name="Moule S."/>
            <person name="Sanders M."/>
            <person name="Whitehead S."/>
            <person name="Quail M.A."/>
            <person name="Dougan G."/>
            <person name="Parkhill J."/>
            <person name="Prentice M.B."/>
        </authorList>
    </citation>
    <scope>NUCLEOTIDE SEQUENCE [LARGE SCALE GENOMIC DNA]</scope>
    <source>
        <strain>NCTC 13174 / 8081</strain>
    </source>
</reference>
<sequence>MSKPIQMERGVKYRDADKMALIPIKTVVTERQELLRKPEWMKIKLPADSSRIQGIKAAMRKNGLHSVCEEASCPNLSECFNHGTATFMILGAICTRRCPFCDVAHGRPVTPDANEPEKLAQTIKDMGLRYVVITSVDRDDLRDGGAQHFADCISAIRAKNPTIKIETLVPDFRGRMDRALDILTVTPPDVFNHNLENVPRVYRQVRPGANYEWSLKLLERFKEAHPDIPTKSGLMVGLGETNAEIVEVMRDLRRHGVTMLTLGQYLQPSRHHLPVQRYVSPAEFDEMKAEAMAMGFTHAACGPFVRSSYHADLQAKGLEVK</sequence>
<dbReference type="EC" id="2.8.1.8" evidence="1"/>
<dbReference type="EMBL" id="AM286415">
    <property type="protein sequence ID" value="CAL13047.1"/>
    <property type="molecule type" value="Genomic_DNA"/>
</dbReference>
<dbReference type="RefSeq" id="WP_004712243.1">
    <property type="nucleotide sequence ID" value="NC_008800.1"/>
</dbReference>
<dbReference type="RefSeq" id="YP_001007197.1">
    <property type="nucleotide sequence ID" value="NC_008800.1"/>
</dbReference>
<dbReference type="SMR" id="A1JPR9"/>
<dbReference type="GeneID" id="93971617"/>
<dbReference type="KEGG" id="yen:YE3008"/>
<dbReference type="PATRIC" id="fig|393305.7.peg.3203"/>
<dbReference type="eggNOG" id="COG0320">
    <property type="taxonomic scope" value="Bacteria"/>
</dbReference>
<dbReference type="HOGENOM" id="CLU_033144_2_1_6"/>
<dbReference type="OrthoDB" id="9787898at2"/>
<dbReference type="UniPathway" id="UPA00538">
    <property type="reaction ID" value="UER00593"/>
</dbReference>
<dbReference type="Proteomes" id="UP000000642">
    <property type="component" value="Chromosome"/>
</dbReference>
<dbReference type="GO" id="GO:0005737">
    <property type="term" value="C:cytoplasm"/>
    <property type="evidence" value="ECO:0007669"/>
    <property type="project" value="UniProtKB-SubCell"/>
</dbReference>
<dbReference type="GO" id="GO:0051539">
    <property type="term" value="F:4 iron, 4 sulfur cluster binding"/>
    <property type="evidence" value="ECO:0007669"/>
    <property type="project" value="UniProtKB-UniRule"/>
</dbReference>
<dbReference type="GO" id="GO:0016992">
    <property type="term" value="F:lipoate synthase activity"/>
    <property type="evidence" value="ECO:0007669"/>
    <property type="project" value="UniProtKB-UniRule"/>
</dbReference>
<dbReference type="GO" id="GO:0046872">
    <property type="term" value="F:metal ion binding"/>
    <property type="evidence" value="ECO:0007669"/>
    <property type="project" value="UniProtKB-KW"/>
</dbReference>
<dbReference type="CDD" id="cd01335">
    <property type="entry name" value="Radical_SAM"/>
    <property type="match status" value="1"/>
</dbReference>
<dbReference type="FunFam" id="3.20.20.70:FF:000023">
    <property type="entry name" value="Lipoyl synthase"/>
    <property type="match status" value="1"/>
</dbReference>
<dbReference type="Gene3D" id="3.20.20.70">
    <property type="entry name" value="Aldolase class I"/>
    <property type="match status" value="1"/>
</dbReference>
<dbReference type="HAMAP" id="MF_00206">
    <property type="entry name" value="Lipoyl_synth"/>
    <property type="match status" value="1"/>
</dbReference>
<dbReference type="InterPro" id="IPR013785">
    <property type="entry name" value="Aldolase_TIM"/>
</dbReference>
<dbReference type="InterPro" id="IPR006638">
    <property type="entry name" value="Elp3/MiaA/NifB-like_rSAM"/>
</dbReference>
<dbReference type="InterPro" id="IPR031691">
    <property type="entry name" value="LIAS_N"/>
</dbReference>
<dbReference type="InterPro" id="IPR003698">
    <property type="entry name" value="Lipoyl_synth"/>
</dbReference>
<dbReference type="InterPro" id="IPR007197">
    <property type="entry name" value="rSAM"/>
</dbReference>
<dbReference type="NCBIfam" id="TIGR00510">
    <property type="entry name" value="lipA"/>
    <property type="match status" value="1"/>
</dbReference>
<dbReference type="NCBIfam" id="NF004019">
    <property type="entry name" value="PRK05481.1"/>
    <property type="match status" value="1"/>
</dbReference>
<dbReference type="NCBIfam" id="NF009544">
    <property type="entry name" value="PRK12928.1"/>
    <property type="match status" value="1"/>
</dbReference>
<dbReference type="PANTHER" id="PTHR10949">
    <property type="entry name" value="LIPOYL SYNTHASE"/>
    <property type="match status" value="1"/>
</dbReference>
<dbReference type="PANTHER" id="PTHR10949:SF0">
    <property type="entry name" value="LIPOYL SYNTHASE, MITOCHONDRIAL"/>
    <property type="match status" value="1"/>
</dbReference>
<dbReference type="Pfam" id="PF16881">
    <property type="entry name" value="LIAS_N"/>
    <property type="match status" value="1"/>
</dbReference>
<dbReference type="Pfam" id="PF04055">
    <property type="entry name" value="Radical_SAM"/>
    <property type="match status" value="1"/>
</dbReference>
<dbReference type="PIRSF" id="PIRSF005963">
    <property type="entry name" value="Lipoyl_synth"/>
    <property type="match status" value="1"/>
</dbReference>
<dbReference type="SFLD" id="SFLDF00271">
    <property type="entry name" value="lipoyl_synthase"/>
    <property type="match status" value="1"/>
</dbReference>
<dbReference type="SFLD" id="SFLDS00029">
    <property type="entry name" value="Radical_SAM"/>
    <property type="match status" value="1"/>
</dbReference>
<dbReference type="SMART" id="SM00729">
    <property type="entry name" value="Elp3"/>
    <property type="match status" value="1"/>
</dbReference>
<dbReference type="SUPFAM" id="SSF102114">
    <property type="entry name" value="Radical SAM enzymes"/>
    <property type="match status" value="1"/>
</dbReference>
<dbReference type="PROSITE" id="PS51918">
    <property type="entry name" value="RADICAL_SAM"/>
    <property type="match status" value="1"/>
</dbReference>
<proteinExistence type="inferred from homology"/>
<comment type="function">
    <text evidence="1">Catalyzes the radical-mediated insertion of two sulfur atoms into the C-6 and C-8 positions of the octanoyl moiety bound to the lipoyl domains of lipoate-dependent enzymes, thereby converting the octanoylated domains into lipoylated derivatives.</text>
</comment>
<comment type="catalytic activity">
    <reaction evidence="1">
        <text>[[Fe-S] cluster scaffold protein carrying a second [4Fe-4S](2+) cluster] + N(6)-octanoyl-L-lysyl-[protein] + 2 oxidized [2Fe-2S]-[ferredoxin] + 2 S-adenosyl-L-methionine + 4 H(+) = [[Fe-S] cluster scaffold protein] + N(6)-[(R)-dihydrolipoyl]-L-lysyl-[protein] + 4 Fe(3+) + 2 hydrogen sulfide + 2 5'-deoxyadenosine + 2 L-methionine + 2 reduced [2Fe-2S]-[ferredoxin]</text>
        <dbReference type="Rhea" id="RHEA:16585"/>
        <dbReference type="Rhea" id="RHEA-COMP:9928"/>
        <dbReference type="Rhea" id="RHEA-COMP:10000"/>
        <dbReference type="Rhea" id="RHEA-COMP:10001"/>
        <dbReference type="Rhea" id="RHEA-COMP:10475"/>
        <dbReference type="Rhea" id="RHEA-COMP:14568"/>
        <dbReference type="Rhea" id="RHEA-COMP:14569"/>
        <dbReference type="ChEBI" id="CHEBI:15378"/>
        <dbReference type="ChEBI" id="CHEBI:17319"/>
        <dbReference type="ChEBI" id="CHEBI:29034"/>
        <dbReference type="ChEBI" id="CHEBI:29919"/>
        <dbReference type="ChEBI" id="CHEBI:33722"/>
        <dbReference type="ChEBI" id="CHEBI:33737"/>
        <dbReference type="ChEBI" id="CHEBI:33738"/>
        <dbReference type="ChEBI" id="CHEBI:57844"/>
        <dbReference type="ChEBI" id="CHEBI:59789"/>
        <dbReference type="ChEBI" id="CHEBI:78809"/>
        <dbReference type="ChEBI" id="CHEBI:83100"/>
        <dbReference type="EC" id="2.8.1.8"/>
    </reaction>
</comment>
<comment type="cofactor">
    <cofactor evidence="1">
        <name>[4Fe-4S] cluster</name>
        <dbReference type="ChEBI" id="CHEBI:49883"/>
    </cofactor>
    <text evidence="1">Binds 2 [4Fe-4S] clusters per subunit. One cluster is coordinated with 3 cysteines and an exchangeable S-adenosyl-L-methionine.</text>
</comment>
<comment type="pathway">
    <text evidence="1">Protein modification; protein lipoylation via endogenous pathway; protein N(6)-(lipoyl)lysine from octanoyl-[acyl-carrier-protein]: step 2/2.</text>
</comment>
<comment type="subcellular location">
    <subcellularLocation>
        <location evidence="1">Cytoplasm</location>
    </subcellularLocation>
</comment>
<comment type="similarity">
    <text evidence="1">Belongs to the radical SAM superfamily. Lipoyl synthase family.</text>
</comment>
<evidence type="ECO:0000255" key="1">
    <source>
        <dbReference type="HAMAP-Rule" id="MF_00206"/>
    </source>
</evidence>
<evidence type="ECO:0000255" key="2">
    <source>
        <dbReference type="PROSITE-ProRule" id="PRU01266"/>
    </source>
</evidence>